<comment type="function">
    <text evidence="1">Activator for both CDC42 and RAC1 by directly engaging these Rho GTPases and acting as potent guanine nucleotide exchange factor (GEF). This activation results in actin cytoskeleton rearrangements and stimulates membrane ruffling, promoting bacterial entry into non-phagocytic cells (By similarity).</text>
</comment>
<comment type="subcellular location">
    <subcellularLocation>
        <location evidence="1">Secreted</location>
    </subcellularLocation>
    <text evidence="1">Secreted via the type III secretion system 1 (SPI-1 T3SS).</text>
</comment>
<comment type="miscellaneous">
    <text>Encoded within a prophage region, which is only present in very few Salmonella isolates.</text>
</comment>
<comment type="similarity">
    <text evidence="2">Belongs to the GEF (guanine exchange factor) SopE family.</text>
</comment>
<reference key="1">
    <citation type="journal article" date="2001" name="J. Mol. Biol.">
        <title>Transfer of the Salmonella type III effector sopE between unrelated phage families.</title>
        <authorList>
            <person name="Mirold S."/>
            <person name="Rabsch W."/>
            <person name="Tschaepe H."/>
            <person name="Hardt W.-D."/>
        </authorList>
    </citation>
    <scope>NUCLEOTIDE SEQUENCE [GENOMIC DNA]</scope>
    <scope>PROPHAGE-RELATED REGION</scope>
    <source>
        <strain>SARC15 / s3013</strain>
        <strain>SARC16 / s3014</strain>
    </source>
</reference>
<dbReference type="EMBL" id="AF378113">
    <property type="protein sequence ID" value="AAL67193.1"/>
    <property type="molecule type" value="Genomic_DNA"/>
</dbReference>
<dbReference type="EMBL" id="AF378114">
    <property type="protein sequence ID" value="AAL67194.1"/>
    <property type="molecule type" value="Genomic_DNA"/>
</dbReference>
<dbReference type="EMBL" id="AY034829">
    <property type="protein sequence ID" value="AAK63084.1"/>
    <property type="molecule type" value="Genomic_DNA"/>
</dbReference>
<dbReference type="SMR" id="Q8VSR1"/>
<dbReference type="GO" id="GO:0005576">
    <property type="term" value="C:extracellular region"/>
    <property type="evidence" value="ECO:0007669"/>
    <property type="project" value="UniProtKB-SubCell"/>
</dbReference>
<dbReference type="GO" id="GO:0005096">
    <property type="term" value="F:GTPase activator activity"/>
    <property type="evidence" value="ECO:0007669"/>
    <property type="project" value="UniProtKB-KW"/>
</dbReference>
<dbReference type="GO" id="GO:0005085">
    <property type="term" value="F:guanyl-nucleotide exchange factor activity"/>
    <property type="evidence" value="ECO:0007669"/>
    <property type="project" value="UniProtKB-KW"/>
</dbReference>
<dbReference type="GO" id="GO:0030036">
    <property type="term" value="P:actin cytoskeleton organization"/>
    <property type="evidence" value="ECO:0007669"/>
    <property type="project" value="InterPro"/>
</dbReference>
<dbReference type="Gene3D" id="1.10.4120.10">
    <property type="entry name" value="SopE-like, GEF domain"/>
    <property type="match status" value="1"/>
</dbReference>
<dbReference type="InterPro" id="IPR005414">
    <property type="entry name" value="SopE"/>
</dbReference>
<dbReference type="InterPro" id="IPR035949">
    <property type="entry name" value="SopE-like_GEF_dom_sf"/>
</dbReference>
<dbReference type="InterPro" id="IPR016019">
    <property type="entry name" value="SopE_GEF_dom"/>
</dbReference>
<dbReference type="InterPro" id="IPR016018">
    <property type="entry name" value="SopE_N_dom"/>
</dbReference>
<dbReference type="NCBIfam" id="NF011809">
    <property type="entry name" value="PRK15279.1"/>
    <property type="match status" value="1"/>
</dbReference>
<dbReference type="NCBIfam" id="NF011810">
    <property type="entry name" value="PRK15280.1"/>
    <property type="match status" value="1"/>
</dbReference>
<dbReference type="Pfam" id="PF05364">
    <property type="entry name" value="SecIII_SopE_N"/>
    <property type="match status" value="1"/>
</dbReference>
<dbReference type="Pfam" id="PF07487">
    <property type="entry name" value="SopE_GEF"/>
    <property type="match status" value="1"/>
</dbReference>
<dbReference type="PIRSF" id="PIRSF034781">
    <property type="entry name" value="SecIII_sopE"/>
    <property type="match status" value="1"/>
</dbReference>
<dbReference type="PRINTS" id="PR01593">
    <property type="entry name" value="SOPEPROTEIN"/>
</dbReference>
<dbReference type="SUPFAM" id="SSF81832">
    <property type="entry name" value="SopE-like GEF domain"/>
    <property type="match status" value="1"/>
</dbReference>
<feature type="initiator methionine" description="Removed" evidence="1">
    <location>
        <position position="1"/>
    </location>
</feature>
<feature type="chain" id="PRO_0000220733" description="Guanine nucleotide exchange factor SopE">
    <location>
        <begin position="2"/>
        <end position="240"/>
    </location>
</feature>
<feature type="region of interest" description="GEF catalytic domain" evidence="1">
    <location>
        <begin position="78"/>
        <end position="240"/>
    </location>
</feature>
<feature type="sequence variant" description="In strain: SARC16 / s3014.">
    <original>A</original>
    <variation>T</variation>
    <location>
        <position position="63"/>
    </location>
</feature>
<feature type="sequence variant" description="In strain: SARC16 / s3014.">
    <original>A</original>
    <variation>E</variation>
    <location>
        <position position="73"/>
    </location>
</feature>
<feature type="sequence variant" description="In strain: SARC16 / s3014.">
    <original>A</original>
    <variation>T</variation>
    <location>
        <position position="76"/>
    </location>
</feature>
<name>SOPE_SALEE</name>
<gene>
    <name type="primary">sopE</name>
</gene>
<proteinExistence type="inferred from homology"/>
<organism>
    <name type="scientific">Salmonella enterica VII</name>
    <dbReference type="NCBI Taxonomy" id="59208"/>
    <lineage>
        <taxon>Bacteria</taxon>
        <taxon>Pseudomonadati</taxon>
        <taxon>Pseudomonadota</taxon>
        <taxon>Gammaproteobacteria</taxon>
        <taxon>Enterobacterales</taxon>
        <taxon>Enterobacteriaceae</taxon>
        <taxon>Salmonella</taxon>
    </lineage>
</organism>
<accession>Q8VSR1</accession>
<accession>Q8VLN0</accession>
<evidence type="ECO:0000250" key="1"/>
<evidence type="ECO:0000305" key="2"/>
<keyword id="KW-0343">GTPase activation</keyword>
<keyword id="KW-0344">Guanine-nucleotide releasing factor</keyword>
<keyword id="KW-0964">Secreted</keyword>
<keyword id="KW-0843">Virulence</keyword>
<sequence>MTKITLSLQNFRIQKQETTPLKEKSTEKTSLAKAILAVKNHFNKLSSNLSERFISHKNTESSATHSHRGSASADRAVLTNKVVKEFMLQTLNDMDIRGNASKDPAYASQTREAILSAVYSKNKDQCCKLLISKGINIAPFLKEIGEAAQNAGLPGATKNDVFTPSGAGANPFITPLVSSANCKYPHMFINQHQQASFKIYAEKIIMTEVAPLFNECVMPTPQQFHLILENIANKYIQNTP</sequence>
<protein>
    <recommendedName>
        <fullName>Guanine nucleotide exchange factor SopE</fullName>
    </recommendedName>
    <alternativeName>
        <fullName>Effector protein SopE</fullName>
    </alternativeName>
    <alternativeName>
        <fullName>Toxin SopE</fullName>
    </alternativeName>
</protein>